<dbReference type="EC" id="3.1.-.-" evidence="1"/>
<dbReference type="EMBL" id="CH902619">
    <property type="protein sequence ID" value="EDV37436.1"/>
    <property type="molecule type" value="Genomic_DNA"/>
</dbReference>
<dbReference type="SMR" id="B3MDA3"/>
<dbReference type="FunCoup" id="B3MDA3">
    <property type="interactions" value="2157"/>
</dbReference>
<dbReference type="STRING" id="7217.B3MDA3"/>
<dbReference type="EnsemblMetazoa" id="FBtr0118144">
    <property type="protein sequence ID" value="FBpp0116636"/>
    <property type="gene ID" value="FBgn0090476"/>
</dbReference>
<dbReference type="EnsemblMetazoa" id="XM_001960578.4">
    <property type="protein sequence ID" value="XP_001960614.1"/>
    <property type="gene ID" value="LOC6496286"/>
</dbReference>
<dbReference type="GeneID" id="6496286"/>
<dbReference type="KEGG" id="dan:6496286"/>
<dbReference type="CTD" id="2237"/>
<dbReference type="eggNOG" id="KOG2519">
    <property type="taxonomic scope" value="Eukaryota"/>
</dbReference>
<dbReference type="HOGENOM" id="CLU_032444_2_0_1"/>
<dbReference type="InParanoid" id="B3MDA3"/>
<dbReference type="OMA" id="MGIPWVQ"/>
<dbReference type="OrthoDB" id="1937206at2759"/>
<dbReference type="PhylomeDB" id="B3MDA3"/>
<dbReference type="Proteomes" id="UP000007801">
    <property type="component" value="Unassembled WGS sequence"/>
</dbReference>
<dbReference type="GO" id="GO:0005739">
    <property type="term" value="C:mitochondrion"/>
    <property type="evidence" value="ECO:0007669"/>
    <property type="project" value="UniProtKB-SubCell"/>
</dbReference>
<dbReference type="GO" id="GO:0005730">
    <property type="term" value="C:nucleolus"/>
    <property type="evidence" value="ECO:0007669"/>
    <property type="project" value="UniProtKB-SubCell"/>
</dbReference>
<dbReference type="GO" id="GO:0005654">
    <property type="term" value="C:nucleoplasm"/>
    <property type="evidence" value="ECO:0007669"/>
    <property type="project" value="UniProtKB-SubCell"/>
</dbReference>
<dbReference type="GO" id="GO:0008409">
    <property type="term" value="F:5'-3' exonuclease activity"/>
    <property type="evidence" value="ECO:0007669"/>
    <property type="project" value="UniProtKB-UniRule"/>
</dbReference>
<dbReference type="GO" id="GO:0017108">
    <property type="term" value="F:5'-flap endonuclease activity"/>
    <property type="evidence" value="ECO:0007669"/>
    <property type="project" value="UniProtKB-UniRule"/>
</dbReference>
<dbReference type="GO" id="GO:0003677">
    <property type="term" value="F:DNA binding"/>
    <property type="evidence" value="ECO:0007669"/>
    <property type="project" value="UniProtKB-UniRule"/>
</dbReference>
<dbReference type="GO" id="GO:0000287">
    <property type="term" value="F:magnesium ion binding"/>
    <property type="evidence" value="ECO:0007669"/>
    <property type="project" value="UniProtKB-UniRule"/>
</dbReference>
<dbReference type="GO" id="GO:0030145">
    <property type="term" value="F:manganese ion binding"/>
    <property type="evidence" value="ECO:0007669"/>
    <property type="project" value="TreeGrafter"/>
</dbReference>
<dbReference type="GO" id="GO:0004523">
    <property type="term" value="F:RNA-DNA hybrid ribonuclease activity"/>
    <property type="evidence" value="ECO:0007669"/>
    <property type="project" value="TreeGrafter"/>
</dbReference>
<dbReference type="GO" id="GO:0006284">
    <property type="term" value="P:base-excision repair"/>
    <property type="evidence" value="ECO:0007669"/>
    <property type="project" value="UniProtKB-UniRule"/>
</dbReference>
<dbReference type="GO" id="GO:0043137">
    <property type="term" value="P:DNA replication, removal of RNA primer"/>
    <property type="evidence" value="ECO:0007669"/>
    <property type="project" value="UniProtKB-UniRule"/>
</dbReference>
<dbReference type="CDD" id="cd09867">
    <property type="entry name" value="PIN_FEN1"/>
    <property type="match status" value="1"/>
</dbReference>
<dbReference type="FunFam" id="1.10.150.20:FF:000009">
    <property type="entry name" value="Flap endonuclease 1"/>
    <property type="match status" value="1"/>
</dbReference>
<dbReference type="FunFam" id="3.40.50.1010:FF:000003">
    <property type="entry name" value="Flap endonuclease 1"/>
    <property type="match status" value="1"/>
</dbReference>
<dbReference type="Gene3D" id="1.10.150.20">
    <property type="entry name" value="5' to 3' exonuclease, C-terminal subdomain"/>
    <property type="match status" value="1"/>
</dbReference>
<dbReference type="Gene3D" id="3.40.50.1010">
    <property type="entry name" value="5'-nuclease"/>
    <property type="match status" value="1"/>
</dbReference>
<dbReference type="HAMAP" id="MF_00614">
    <property type="entry name" value="Fen"/>
    <property type="match status" value="1"/>
</dbReference>
<dbReference type="InterPro" id="IPR036279">
    <property type="entry name" value="5-3_exonuclease_C_sf"/>
</dbReference>
<dbReference type="InterPro" id="IPR023426">
    <property type="entry name" value="Flap_endonuc"/>
</dbReference>
<dbReference type="InterPro" id="IPR008918">
    <property type="entry name" value="HhH2"/>
</dbReference>
<dbReference type="InterPro" id="IPR029060">
    <property type="entry name" value="PIN-like_dom_sf"/>
</dbReference>
<dbReference type="InterPro" id="IPR006086">
    <property type="entry name" value="XPG-I_dom"/>
</dbReference>
<dbReference type="InterPro" id="IPR006084">
    <property type="entry name" value="XPG/Rad2"/>
</dbReference>
<dbReference type="InterPro" id="IPR019974">
    <property type="entry name" value="XPG_CS"/>
</dbReference>
<dbReference type="InterPro" id="IPR006085">
    <property type="entry name" value="XPG_DNA_repair_N"/>
</dbReference>
<dbReference type="PANTHER" id="PTHR11081:SF9">
    <property type="entry name" value="FLAP ENDONUCLEASE 1"/>
    <property type="match status" value="1"/>
</dbReference>
<dbReference type="PANTHER" id="PTHR11081">
    <property type="entry name" value="FLAP ENDONUCLEASE FAMILY MEMBER"/>
    <property type="match status" value="1"/>
</dbReference>
<dbReference type="Pfam" id="PF00867">
    <property type="entry name" value="XPG_I"/>
    <property type="match status" value="1"/>
</dbReference>
<dbReference type="Pfam" id="PF00752">
    <property type="entry name" value="XPG_N"/>
    <property type="match status" value="1"/>
</dbReference>
<dbReference type="PRINTS" id="PR00853">
    <property type="entry name" value="XPGRADSUPER"/>
</dbReference>
<dbReference type="SMART" id="SM00279">
    <property type="entry name" value="HhH2"/>
    <property type="match status" value="1"/>
</dbReference>
<dbReference type="SMART" id="SM00484">
    <property type="entry name" value="XPGI"/>
    <property type="match status" value="1"/>
</dbReference>
<dbReference type="SMART" id="SM00485">
    <property type="entry name" value="XPGN"/>
    <property type="match status" value="1"/>
</dbReference>
<dbReference type="SUPFAM" id="SSF47807">
    <property type="entry name" value="5' to 3' exonuclease, C-terminal subdomain"/>
    <property type="match status" value="1"/>
</dbReference>
<dbReference type="SUPFAM" id="SSF88723">
    <property type="entry name" value="PIN domain-like"/>
    <property type="match status" value="1"/>
</dbReference>
<dbReference type="PROSITE" id="PS00841">
    <property type="entry name" value="XPG_1"/>
    <property type="match status" value="1"/>
</dbReference>
<dbReference type="PROSITE" id="PS00842">
    <property type="entry name" value="XPG_2"/>
    <property type="match status" value="1"/>
</dbReference>
<organism>
    <name type="scientific">Drosophila ananassae</name>
    <name type="common">Fruit fly</name>
    <dbReference type="NCBI Taxonomy" id="7217"/>
    <lineage>
        <taxon>Eukaryota</taxon>
        <taxon>Metazoa</taxon>
        <taxon>Ecdysozoa</taxon>
        <taxon>Arthropoda</taxon>
        <taxon>Hexapoda</taxon>
        <taxon>Insecta</taxon>
        <taxon>Pterygota</taxon>
        <taxon>Neoptera</taxon>
        <taxon>Endopterygota</taxon>
        <taxon>Diptera</taxon>
        <taxon>Brachycera</taxon>
        <taxon>Muscomorpha</taxon>
        <taxon>Ephydroidea</taxon>
        <taxon>Drosophilidae</taxon>
        <taxon>Drosophila</taxon>
        <taxon>Sophophora</taxon>
    </lineage>
</organism>
<gene>
    <name evidence="1" type="primary">Fen1</name>
    <name type="ORF">GF13444</name>
</gene>
<protein>
    <recommendedName>
        <fullName evidence="1">Flap endonuclease 1</fullName>
        <shortName evidence="1">FEN-1</shortName>
        <ecNumber evidence="1">3.1.-.-</ecNumber>
    </recommendedName>
    <alternativeName>
        <fullName evidence="1">Flap structure-specific endonuclease 1</fullName>
    </alternativeName>
</protein>
<comment type="function">
    <text evidence="1">Structure-specific nuclease with 5'-flap endonuclease and 5'-3' exonuclease activities involved in DNA replication and repair. During DNA replication, cleaves the 5'-overhanging flap structure that is generated by displacement synthesis when DNA polymerase encounters the 5'-end of a downstream Okazaki fragment. It enters the flap from the 5'-end and then tracks to cleave the flap base, leaving a nick for ligation. Also involved in the long patch base excision repair (LP-BER) pathway, by cleaving within the apurinic/apyrimidinic (AP) site-terminated flap. Acts as a genome stabilization factor that prevents flaps from equilibrating into structures that lead to duplications and deletions. Also possesses 5'-3' exonuclease activity on nicked or gapped double-stranded DNA, and exhibits RNase H activity. Also involved in replication and repair of rDNA and in repairing mitochondrial DNA.</text>
</comment>
<comment type="cofactor">
    <cofactor evidence="1">
        <name>Mg(2+)</name>
        <dbReference type="ChEBI" id="CHEBI:18420"/>
    </cofactor>
    <text evidence="1">Binds 2 magnesium ions per subunit. They probably participate in the reaction catalyzed by the enzyme. May bind an additional third magnesium ion after substrate binding.</text>
</comment>
<comment type="subunit">
    <text evidence="1">Interacts with PCNA. Three molecules of FEN1 bind to one PCNA trimer with each molecule binding to one PCNA monomer. PCNA stimulates the nuclease activity without altering cleavage specificity.</text>
</comment>
<comment type="subcellular location">
    <subcellularLocation>
        <location evidence="1">Nucleus</location>
        <location evidence="1">Nucleolus</location>
    </subcellularLocation>
    <subcellularLocation>
        <location evidence="1">Nucleus</location>
        <location evidence="1">Nucleoplasm</location>
    </subcellularLocation>
    <subcellularLocation>
        <location evidence="1">Mitochondrion</location>
    </subcellularLocation>
    <text evidence="1">Resides mostly in the nucleoli and relocalizes to the nucleoplasm upon DNA damage.</text>
</comment>
<comment type="PTM">
    <text evidence="1">Phosphorylated. Phosphorylation upon DNA damage induces relocalization to the nuclear plasma.</text>
</comment>
<comment type="similarity">
    <text evidence="1">Belongs to the XPG/RAD2 endonuclease family. FEN1 subfamily.</text>
</comment>
<feature type="chain" id="PRO_0000403497" description="Flap endonuclease 1">
    <location>
        <begin position="1"/>
        <end position="388"/>
    </location>
</feature>
<feature type="region of interest" description="N-domain">
    <location>
        <begin position="1"/>
        <end position="104"/>
    </location>
</feature>
<feature type="region of interest" description="I-domain">
    <location>
        <begin position="122"/>
        <end position="253"/>
    </location>
</feature>
<feature type="region of interest" description="Interaction with PCNA" evidence="1">
    <location>
        <begin position="336"/>
        <end position="344"/>
    </location>
</feature>
<feature type="region of interest" description="Disordered" evidence="2">
    <location>
        <begin position="343"/>
        <end position="388"/>
    </location>
</feature>
<feature type="binding site" evidence="1">
    <location>
        <position position="34"/>
    </location>
    <ligand>
        <name>Mg(2+)</name>
        <dbReference type="ChEBI" id="CHEBI:18420"/>
        <label>1</label>
    </ligand>
</feature>
<feature type="binding site" evidence="1">
    <location>
        <position position="47"/>
    </location>
    <ligand>
        <name>DNA</name>
        <dbReference type="ChEBI" id="CHEBI:16991"/>
    </ligand>
</feature>
<feature type="binding site" evidence="1">
    <location>
        <position position="70"/>
    </location>
    <ligand>
        <name>DNA</name>
        <dbReference type="ChEBI" id="CHEBI:16991"/>
    </ligand>
</feature>
<feature type="binding site" evidence="1">
    <location>
        <position position="86"/>
    </location>
    <ligand>
        <name>Mg(2+)</name>
        <dbReference type="ChEBI" id="CHEBI:18420"/>
        <label>1</label>
    </ligand>
</feature>
<feature type="binding site" evidence="1">
    <location>
        <position position="158"/>
    </location>
    <ligand>
        <name>DNA</name>
        <dbReference type="ChEBI" id="CHEBI:16991"/>
    </ligand>
</feature>
<feature type="binding site" evidence="1">
    <location>
        <position position="158"/>
    </location>
    <ligand>
        <name>Mg(2+)</name>
        <dbReference type="ChEBI" id="CHEBI:18420"/>
        <label>1</label>
    </ligand>
</feature>
<feature type="binding site" evidence="1">
    <location>
        <position position="160"/>
    </location>
    <ligand>
        <name>Mg(2+)</name>
        <dbReference type="ChEBI" id="CHEBI:18420"/>
        <label>1</label>
    </ligand>
</feature>
<feature type="binding site" evidence="1">
    <location>
        <position position="179"/>
    </location>
    <ligand>
        <name>Mg(2+)</name>
        <dbReference type="ChEBI" id="CHEBI:18420"/>
        <label>2</label>
    </ligand>
</feature>
<feature type="binding site" evidence="1">
    <location>
        <position position="181"/>
    </location>
    <ligand>
        <name>Mg(2+)</name>
        <dbReference type="ChEBI" id="CHEBI:18420"/>
        <label>2</label>
    </ligand>
</feature>
<feature type="binding site" evidence="1">
    <location>
        <position position="231"/>
    </location>
    <ligand>
        <name>DNA</name>
        <dbReference type="ChEBI" id="CHEBI:16991"/>
    </ligand>
</feature>
<feature type="binding site" evidence="1">
    <location>
        <position position="233"/>
    </location>
    <ligand>
        <name>DNA</name>
        <dbReference type="ChEBI" id="CHEBI:16991"/>
    </ligand>
</feature>
<feature type="binding site" evidence="1">
    <location>
        <position position="233"/>
    </location>
    <ligand>
        <name>Mg(2+)</name>
        <dbReference type="ChEBI" id="CHEBI:18420"/>
        <label>2</label>
    </ligand>
</feature>
<proteinExistence type="inferred from homology"/>
<name>FEN1_DROAN</name>
<keyword id="KW-0227">DNA damage</keyword>
<keyword id="KW-0234">DNA repair</keyword>
<keyword id="KW-0235">DNA replication</keyword>
<keyword id="KW-0255">Endonuclease</keyword>
<keyword id="KW-0269">Exonuclease</keyword>
<keyword id="KW-0378">Hydrolase</keyword>
<keyword id="KW-0460">Magnesium</keyword>
<keyword id="KW-0479">Metal-binding</keyword>
<keyword id="KW-0496">Mitochondrion</keyword>
<keyword id="KW-0540">Nuclease</keyword>
<keyword id="KW-0539">Nucleus</keyword>
<keyword id="KW-0597">Phosphoprotein</keyword>
<keyword id="KW-1185">Reference proteome</keyword>
<reference key="1">
    <citation type="journal article" date="2007" name="Nature">
        <title>Evolution of genes and genomes on the Drosophila phylogeny.</title>
        <authorList>
            <consortium name="Drosophila 12 genomes consortium"/>
        </authorList>
    </citation>
    <scope>NUCLEOTIDE SEQUENCE [LARGE SCALE GENOMIC DNA]</scope>
    <source>
        <strain>Tucson 14024-0371.13</strain>
    </source>
</reference>
<accession>B3MDA3</accession>
<sequence length="388" mass="43176">MGILGLSKLIADLAPQAIRESEIKNFFGRKVAIDASMCLYQFLIAVRSEGAQLATVNGDPTSHLMGMFYRTIRLLDNGIKPVYVFDGKPPDLKSGELAKRAERREEAEKALKAATEAGDDAEIEKFNRRLVRVTKEHAREAKELLKLMGVPYVEAPCEAEAQCAALVKAGKVYATATEDMDALTFGSTKLLRYLTYSEARKMPVKEFSYEKLLDGLGVNNREFIDLCILLGCDYCESIKGIGPKRAIELINNYRDIETILDNLDTSKYTVPENWNYKIARELFIEPEVANADAIELKWTEPDEEGLVKFLCGDRQFNEDRVRSGAKKLLKSKQSQTQVRLDSFFKTLPSTPSATNAAKRKAEEAKKSANNKKAKTSGGGGGGRGRRPK</sequence>
<evidence type="ECO:0000255" key="1">
    <source>
        <dbReference type="HAMAP-Rule" id="MF_03140"/>
    </source>
</evidence>
<evidence type="ECO:0000256" key="2">
    <source>
        <dbReference type="SAM" id="MobiDB-lite"/>
    </source>
</evidence>